<keyword id="KW-0227">DNA damage</keyword>
<keyword id="KW-0234">DNA repair</keyword>
<keyword id="KW-1185">Reference proteome</keyword>
<accession>Q328E9</accession>
<organism>
    <name type="scientific">Shigella dysenteriae serotype 1 (strain Sd197)</name>
    <dbReference type="NCBI Taxonomy" id="300267"/>
    <lineage>
        <taxon>Bacteria</taxon>
        <taxon>Pseudomonadati</taxon>
        <taxon>Pseudomonadota</taxon>
        <taxon>Gammaproteobacteria</taxon>
        <taxon>Enterobacterales</taxon>
        <taxon>Enterobacteriaceae</taxon>
        <taxon>Shigella</taxon>
    </lineage>
</organism>
<sequence length="615" mass="67939">MPIQVLPPQLANQIAAGEVVERPASVVKELVENSLDAGATRIDIDIERGGAKLIRIRDNGCGIKKDELALALARHATSKIASLDDLEAIISLGFRGEALASISSVSRLTLTSRTAEQQEAWQAYAEGRDMDVTVKPAAHPVGTTLEVLDLFYNTPARRKFLRTEKTEFNHIDEIIRRIALARFDVTINLSHNGKIVRQYRAVPEGGQKERRLGAICGTAFLEQALAIEWQHCDLTLRGWVADPNHTTPALAEIQYCYVNGRMMRDRLINHAIRQACEDKLGADQQPAFVLYLEIDPHQVDVNVHPAKHEVRFHQSRLVHDFIYQGVLSVLQQQLETPLPLDDEPQPAPRAIPENRVAAGRNHFAEPAVREPVAPRYTPAPASGSRPAAPWPNTQPGYQKQQGEVYRQLLQTPAPMQKPKAPEPQEPALAANSQSFGRVLTIVHSDCALLERDGNISLLALPAAERWLRQAQLTPGEAPVCAQPLLIPLRLKVSGEEKSALEKAQSALAELGIDFQSDAQHVTIRAVPLPLRQQNLQILIPELIGYLAKQSVFEPGNIAQWIARNLMSEHAQWSMAQAITLLADVERLCPQLVKTPPGGLLQSVDLHPAIKALKDE</sequence>
<reference key="1">
    <citation type="journal article" date="2005" name="Nucleic Acids Res.">
        <title>Genome dynamics and diversity of Shigella species, the etiologic agents of bacillary dysentery.</title>
        <authorList>
            <person name="Yang F."/>
            <person name="Yang J."/>
            <person name="Zhang X."/>
            <person name="Chen L."/>
            <person name="Jiang Y."/>
            <person name="Yan Y."/>
            <person name="Tang X."/>
            <person name="Wang J."/>
            <person name="Xiong Z."/>
            <person name="Dong J."/>
            <person name="Xue Y."/>
            <person name="Zhu Y."/>
            <person name="Xu X."/>
            <person name="Sun L."/>
            <person name="Chen S."/>
            <person name="Nie H."/>
            <person name="Peng J."/>
            <person name="Xu J."/>
            <person name="Wang Y."/>
            <person name="Yuan Z."/>
            <person name="Wen Y."/>
            <person name="Yao Z."/>
            <person name="Shen Y."/>
            <person name="Qiang B."/>
            <person name="Hou Y."/>
            <person name="Yu J."/>
            <person name="Jin Q."/>
        </authorList>
    </citation>
    <scope>NUCLEOTIDE SEQUENCE [LARGE SCALE GENOMIC DNA]</scope>
    <source>
        <strain>Sd197</strain>
    </source>
</reference>
<name>MUTL_SHIDS</name>
<evidence type="ECO:0000255" key="1">
    <source>
        <dbReference type="HAMAP-Rule" id="MF_00149"/>
    </source>
</evidence>
<evidence type="ECO:0000256" key="2">
    <source>
        <dbReference type="SAM" id="MobiDB-lite"/>
    </source>
</evidence>
<gene>
    <name evidence="1" type="primary">mutL</name>
    <name type="ordered locus">SDY_4419</name>
</gene>
<dbReference type="EMBL" id="CP000034">
    <property type="protein sequence ID" value="ABB64306.1"/>
    <property type="molecule type" value="Genomic_DNA"/>
</dbReference>
<dbReference type="RefSeq" id="WP_001122465.1">
    <property type="nucleotide sequence ID" value="NC_007606.1"/>
</dbReference>
<dbReference type="RefSeq" id="YP_405797.1">
    <property type="nucleotide sequence ID" value="NC_007606.1"/>
</dbReference>
<dbReference type="SMR" id="Q328E9"/>
<dbReference type="STRING" id="300267.SDY_4419"/>
<dbReference type="EnsemblBacteria" id="ABB64306">
    <property type="protein sequence ID" value="ABB64306"/>
    <property type="gene ID" value="SDY_4419"/>
</dbReference>
<dbReference type="KEGG" id="sdy:SDY_4419"/>
<dbReference type="PATRIC" id="fig|300267.13.peg.5217"/>
<dbReference type="HOGENOM" id="CLU_004131_5_1_6"/>
<dbReference type="Proteomes" id="UP000002716">
    <property type="component" value="Chromosome"/>
</dbReference>
<dbReference type="GO" id="GO:0032300">
    <property type="term" value="C:mismatch repair complex"/>
    <property type="evidence" value="ECO:0007669"/>
    <property type="project" value="InterPro"/>
</dbReference>
<dbReference type="GO" id="GO:0005524">
    <property type="term" value="F:ATP binding"/>
    <property type="evidence" value="ECO:0007669"/>
    <property type="project" value="InterPro"/>
</dbReference>
<dbReference type="GO" id="GO:0016887">
    <property type="term" value="F:ATP hydrolysis activity"/>
    <property type="evidence" value="ECO:0007669"/>
    <property type="project" value="InterPro"/>
</dbReference>
<dbReference type="GO" id="GO:0140664">
    <property type="term" value="F:ATP-dependent DNA damage sensor activity"/>
    <property type="evidence" value="ECO:0007669"/>
    <property type="project" value="InterPro"/>
</dbReference>
<dbReference type="GO" id="GO:0030983">
    <property type="term" value="F:mismatched DNA binding"/>
    <property type="evidence" value="ECO:0007669"/>
    <property type="project" value="InterPro"/>
</dbReference>
<dbReference type="GO" id="GO:0006298">
    <property type="term" value="P:mismatch repair"/>
    <property type="evidence" value="ECO:0007669"/>
    <property type="project" value="UniProtKB-UniRule"/>
</dbReference>
<dbReference type="CDD" id="cd16926">
    <property type="entry name" value="HATPase_MutL-MLH-PMS-like"/>
    <property type="match status" value="1"/>
</dbReference>
<dbReference type="CDD" id="cd03482">
    <property type="entry name" value="MutL_Trans_MutL"/>
    <property type="match status" value="1"/>
</dbReference>
<dbReference type="FunFam" id="3.30.230.10:FF:000013">
    <property type="entry name" value="DNA mismatch repair endonuclease MutL"/>
    <property type="match status" value="1"/>
</dbReference>
<dbReference type="FunFam" id="3.30.565.10:FF:000003">
    <property type="entry name" value="DNA mismatch repair endonuclease MutL"/>
    <property type="match status" value="1"/>
</dbReference>
<dbReference type="FunFam" id="3.30.1370.100:FF:000002">
    <property type="entry name" value="DNA mismatch repair protein MutL"/>
    <property type="match status" value="1"/>
</dbReference>
<dbReference type="Gene3D" id="3.30.230.10">
    <property type="match status" value="1"/>
</dbReference>
<dbReference type="Gene3D" id="3.30.565.10">
    <property type="entry name" value="Histidine kinase-like ATPase, C-terminal domain"/>
    <property type="match status" value="1"/>
</dbReference>
<dbReference type="Gene3D" id="3.30.1540.20">
    <property type="entry name" value="MutL, C-terminal domain, dimerisation subdomain"/>
    <property type="match status" value="1"/>
</dbReference>
<dbReference type="Gene3D" id="3.30.1370.100">
    <property type="entry name" value="MutL, C-terminal domain, regulatory subdomain"/>
    <property type="match status" value="1"/>
</dbReference>
<dbReference type="HAMAP" id="MF_00149">
    <property type="entry name" value="DNA_mis_repair"/>
    <property type="match status" value="1"/>
</dbReference>
<dbReference type="InterPro" id="IPR014762">
    <property type="entry name" value="DNA_mismatch_repair_CS"/>
</dbReference>
<dbReference type="InterPro" id="IPR020667">
    <property type="entry name" value="DNA_mismatch_repair_MutL"/>
</dbReference>
<dbReference type="InterPro" id="IPR013507">
    <property type="entry name" value="DNA_mismatch_S5_2-like"/>
</dbReference>
<dbReference type="InterPro" id="IPR036890">
    <property type="entry name" value="HATPase_C_sf"/>
</dbReference>
<dbReference type="InterPro" id="IPR002099">
    <property type="entry name" value="MutL/Mlh/PMS"/>
</dbReference>
<dbReference type="InterPro" id="IPR038973">
    <property type="entry name" value="MutL/Mlh/Pms-like"/>
</dbReference>
<dbReference type="InterPro" id="IPR014790">
    <property type="entry name" value="MutL_C"/>
</dbReference>
<dbReference type="InterPro" id="IPR042120">
    <property type="entry name" value="MutL_C_dimsub"/>
</dbReference>
<dbReference type="InterPro" id="IPR042121">
    <property type="entry name" value="MutL_C_regsub"/>
</dbReference>
<dbReference type="InterPro" id="IPR037198">
    <property type="entry name" value="MutL_C_sf"/>
</dbReference>
<dbReference type="InterPro" id="IPR020568">
    <property type="entry name" value="Ribosomal_Su5_D2-typ_SF"/>
</dbReference>
<dbReference type="InterPro" id="IPR014721">
    <property type="entry name" value="Ribsml_uS5_D2-typ_fold_subgr"/>
</dbReference>
<dbReference type="NCBIfam" id="TIGR00585">
    <property type="entry name" value="mutl"/>
    <property type="match status" value="1"/>
</dbReference>
<dbReference type="NCBIfam" id="NF000948">
    <property type="entry name" value="PRK00095.1-1"/>
    <property type="match status" value="1"/>
</dbReference>
<dbReference type="PANTHER" id="PTHR10073">
    <property type="entry name" value="DNA MISMATCH REPAIR PROTEIN MLH, PMS, MUTL"/>
    <property type="match status" value="1"/>
</dbReference>
<dbReference type="PANTHER" id="PTHR10073:SF12">
    <property type="entry name" value="DNA MISMATCH REPAIR PROTEIN MLH1"/>
    <property type="match status" value="1"/>
</dbReference>
<dbReference type="Pfam" id="PF01119">
    <property type="entry name" value="DNA_mis_repair"/>
    <property type="match status" value="1"/>
</dbReference>
<dbReference type="Pfam" id="PF13589">
    <property type="entry name" value="HATPase_c_3"/>
    <property type="match status" value="1"/>
</dbReference>
<dbReference type="Pfam" id="PF08676">
    <property type="entry name" value="MutL_C"/>
    <property type="match status" value="1"/>
</dbReference>
<dbReference type="SMART" id="SM01340">
    <property type="entry name" value="DNA_mis_repair"/>
    <property type="match status" value="1"/>
</dbReference>
<dbReference type="SMART" id="SM00853">
    <property type="entry name" value="MutL_C"/>
    <property type="match status" value="1"/>
</dbReference>
<dbReference type="SUPFAM" id="SSF55874">
    <property type="entry name" value="ATPase domain of HSP90 chaperone/DNA topoisomerase II/histidine kinase"/>
    <property type="match status" value="1"/>
</dbReference>
<dbReference type="SUPFAM" id="SSF118116">
    <property type="entry name" value="DNA mismatch repair protein MutL"/>
    <property type="match status" value="1"/>
</dbReference>
<dbReference type="SUPFAM" id="SSF54211">
    <property type="entry name" value="Ribosomal protein S5 domain 2-like"/>
    <property type="match status" value="1"/>
</dbReference>
<dbReference type="PROSITE" id="PS00058">
    <property type="entry name" value="DNA_MISMATCH_REPAIR_1"/>
    <property type="match status" value="1"/>
</dbReference>
<proteinExistence type="inferred from homology"/>
<protein>
    <recommendedName>
        <fullName evidence="1">DNA mismatch repair protein MutL</fullName>
    </recommendedName>
</protein>
<comment type="function">
    <text evidence="1">This protein is involved in the repair of mismatches in DNA. It is required for dam-dependent methyl-directed DNA mismatch repair. May act as a 'molecular matchmaker', a protein that promotes the formation of a stable complex between two or more DNA-binding proteins in an ATP-dependent manner without itself being part of a final effector complex.</text>
</comment>
<comment type="similarity">
    <text evidence="1">Belongs to the DNA mismatch repair MutL/HexB family.</text>
</comment>
<feature type="chain" id="PRO_1000010077" description="DNA mismatch repair protein MutL">
    <location>
        <begin position="1"/>
        <end position="615"/>
    </location>
</feature>
<feature type="region of interest" description="Disordered" evidence="2">
    <location>
        <begin position="370"/>
        <end position="397"/>
    </location>
</feature>
<feature type="compositionally biased region" description="Low complexity" evidence="2">
    <location>
        <begin position="378"/>
        <end position="391"/>
    </location>
</feature>